<sequence length="1183" mass="133203">MAGQVVQYGRHRKRRNYARISEVLELPNLIEIQTKSYEWFLREGLIEMFRDISPIEDFTGNLSLEFVDYRLGEPKYDLEESKNRDATYAAPLRVKVRLIIKETGEVKEQEVFMGDFPLMTDTGTFVINGAERVIVSQLVRSPSVYFNEKIDKNGRENYDATIIPNRGAWLEYETDAKDVVYVRIDRTRKLPLTVLLRALGFSSDQEIVDLLGDNEYLRNTLEKDGTENTEQALLEIYERLRPGEPPTVENAKSLLYSRFFDPKRYDLASVGRYKTNKKLHLKHRLFNQKLAEPIVNTETGEIVVEEGTVLDRRKIDEIMDVLESNANSEVFELHGSVIDEPVEIQSIKVYVPNDDEGRTTTVIGNAFPDSEVKCITPADIIASMSYFFNLLSGIGYTDDIDHLGNRRLRSVGELLQNQFRIGLSRMERVVRERMSIQDTESITPQQLINIRPVIASIKEFFGSSQLSQFMDQANPLAELTHKRRLSALGPGGLTRERAQMEVRDVHYSHYGRMCPIETPEGPNIGLINSLSSYARVNEFGFIETPYRKVDLDTHAITDQIDYLTADEEDSYVVAQANSKLDENGRFMDDEVVCRFRGNNTVMAKEKMDYMDVSPKQVVSAATACIPFLENDDSNRALMGANMQRQAVPLMNPEAPFVGTGMEHVAARDSGAAITAKHRGRVEHVESNEILVRRLVEENGVEHEGELDRYPLAKFKRSNSGTCYNQRPIVAVGDVVEFNEILADGPSMELGEMALGRNVVVGFMTWDGYNYEDAVIMSERLVKDDVYTSIHIEEYESEARDTKLGPEEITRDIPNVSESALKNLDDRGIVYIGAEVKDGDILVGKVTPKGVTELTAEERLLHAIFGEKAREVRDTSLRVPHGAGGIVLDVKVFNREEGDDTLSPGVNQLVRVYIVQKRKIHVGDKMCGRHGNKGVISKIVPEEDMPYLPDGRPIDIMLNPLGVPSRMNIGQVLELHLGMAAKNLGIHVASPVFDGANDDDVWSTIEEAGMARDGKTVLYDGRTGEPFDNRISVGVMYMLKLAHMVDDKLHARSTGPYSLVTQQPLGGKAQFGGQRFGEMEVWALEAYGAAYTLQEILTYKSDDTVGRVKTYEAIVKGENISRPSVPESFRVLMKELQSLGLDVKVMDEQDNEIEMTDVDDDDVVERKVDLQQNDAPETQKEVTD</sequence>
<accession>Q6GJC6</accession>
<dbReference type="EC" id="2.7.7.6" evidence="1"/>
<dbReference type="EMBL" id="BX571856">
    <property type="protein sequence ID" value="CAG39568.1"/>
    <property type="molecule type" value="Genomic_DNA"/>
</dbReference>
<dbReference type="RefSeq" id="WP_000918664.1">
    <property type="nucleotide sequence ID" value="NC_002952.2"/>
</dbReference>
<dbReference type="SMR" id="Q6GJC6"/>
<dbReference type="KEGG" id="sar:SAR0547"/>
<dbReference type="HOGENOM" id="CLU_000524_4_1_9"/>
<dbReference type="Proteomes" id="UP000000596">
    <property type="component" value="Chromosome"/>
</dbReference>
<dbReference type="GO" id="GO:0000428">
    <property type="term" value="C:DNA-directed RNA polymerase complex"/>
    <property type="evidence" value="ECO:0007669"/>
    <property type="project" value="UniProtKB-KW"/>
</dbReference>
<dbReference type="GO" id="GO:0003677">
    <property type="term" value="F:DNA binding"/>
    <property type="evidence" value="ECO:0007669"/>
    <property type="project" value="UniProtKB-UniRule"/>
</dbReference>
<dbReference type="GO" id="GO:0003899">
    <property type="term" value="F:DNA-directed RNA polymerase activity"/>
    <property type="evidence" value="ECO:0007669"/>
    <property type="project" value="UniProtKB-UniRule"/>
</dbReference>
<dbReference type="GO" id="GO:0032549">
    <property type="term" value="F:ribonucleoside binding"/>
    <property type="evidence" value="ECO:0007669"/>
    <property type="project" value="InterPro"/>
</dbReference>
<dbReference type="GO" id="GO:0006351">
    <property type="term" value="P:DNA-templated transcription"/>
    <property type="evidence" value="ECO:0007669"/>
    <property type="project" value="UniProtKB-UniRule"/>
</dbReference>
<dbReference type="CDD" id="cd00653">
    <property type="entry name" value="RNA_pol_B_RPB2"/>
    <property type="match status" value="1"/>
</dbReference>
<dbReference type="FunFam" id="3.90.1800.10:FF:000001">
    <property type="entry name" value="DNA-directed RNA polymerase subunit beta"/>
    <property type="match status" value="1"/>
</dbReference>
<dbReference type="Gene3D" id="2.40.50.100">
    <property type="match status" value="1"/>
</dbReference>
<dbReference type="Gene3D" id="2.40.50.150">
    <property type="match status" value="1"/>
</dbReference>
<dbReference type="Gene3D" id="3.90.1100.10">
    <property type="match status" value="2"/>
</dbReference>
<dbReference type="Gene3D" id="2.30.150.10">
    <property type="entry name" value="DNA-directed RNA polymerase, beta subunit, external 1 domain"/>
    <property type="match status" value="1"/>
</dbReference>
<dbReference type="Gene3D" id="2.40.270.10">
    <property type="entry name" value="DNA-directed RNA polymerase, subunit 2, domain 6"/>
    <property type="match status" value="2"/>
</dbReference>
<dbReference type="Gene3D" id="3.90.1800.10">
    <property type="entry name" value="RNA polymerase alpha subunit dimerisation domain"/>
    <property type="match status" value="1"/>
</dbReference>
<dbReference type="Gene3D" id="3.90.1110.10">
    <property type="entry name" value="RNA polymerase Rpb2, domain 2"/>
    <property type="match status" value="2"/>
</dbReference>
<dbReference type="HAMAP" id="MF_01321">
    <property type="entry name" value="RNApol_bact_RpoB"/>
    <property type="match status" value="1"/>
</dbReference>
<dbReference type="InterPro" id="IPR042107">
    <property type="entry name" value="DNA-dir_RNA_pol_bsu_ext_1_sf"/>
</dbReference>
<dbReference type="InterPro" id="IPR019462">
    <property type="entry name" value="DNA-dir_RNA_pol_bsu_external_1"/>
</dbReference>
<dbReference type="InterPro" id="IPR015712">
    <property type="entry name" value="DNA-dir_RNA_pol_su2"/>
</dbReference>
<dbReference type="InterPro" id="IPR007120">
    <property type="entry name" value="DNA-dir_RNAP_su2_dom"/>
</dbReference>
<dbReference type="InterPro" id="IPR037033">
    <property type="entry name" value="DNA-dir_RNAP_su2_hyb_sf"/>
</dbReference>
<dbReference type="InterPro" id="IPR010243">
    <property type="entry name" value="RNA_pol_bsu_bac"/>
</dbReference>
<dbReference type="InterPro" id="IPR007121">
    <property type="entry name" value="RNA_pol_bsu_CS"/>
</dbReference>
<dbReference type="InterPro" id="IPR007644">
    <property type="entry name" value="RNA_pol_bsu_protrusion"/>
</dbReference>
<dbReference type="InterPro" id="IPR007642">
    <property type="entry name" value="RNA_pol_Rpb2_2"/>
</dbReference>
<dbReference type="InterPro" id="IPR037034">
    <property type="entry name" value="RNA_pol_Rpb2_2_sf"/>
</dbReference>
<dbReference type="InterPro" id="IPR007645">
    <property type="entry name" value="RNA_pol_Rpb2_3"/>
</dbReference>
<dbReference type="InterPro" id="IPR007641">
    <property type="entry name" value="RNA_pol_Rpb2_7"/>
</dbReference>
<dbReference type="InterPro" id="IPR014724">
    <property type="entry name" value="RNA_pol_RPB2_OB-fold"/>
</dbReference>
<dbReference type="NCBIfam" id="NF001616">
    <property type="entry name" value="PRK00405.1"/>
    <property type="match status" value="1"/>
</dbReference>
<dbReference type="NCBIfam" id="TIGR02013">
    <property type="entry name" value="rpoB"/>
    <property type="match status" value="1"/>
</dbReference>
<dbReference type="PANTHER" id="PTHR20856">
    <property type="entry name" value="DNA-DIRECTED RNA POLYMERASE I SUBUNIT 2"/>
    <property type="match status" value="1"/>
</dbReference>
<dbReference type="Pfam" id="PF04563">
    <property type="entry name" value="RNA_pol_Rpb2_1"/>
    <property type="match status" value="1"/>
</dbReference>
<dbReference type="Pfam" id="PF04561">
    <property type="entry name" value="RNA_pol_Rpb2_2"/>
    <property type="match status" value="2"/>
</dbReference>
<dbReference type="Pfam" id="PF04565">
    <property type="entry name" value="RNA_pol_Rpb2_3"/>
    <property type="match status" value="1"/>
</dbReference>
<dbReference type="Pfam" id="PF10385">
    <property type="entry name" value="RNA_pol_Rpb2_45"/>
    <property type="match status" value="1"/>
</dbReference>
<dbReference type="Pfam" id="PF00562">
    <property type="entry name" value="RNA_pol_Rpb2_6"/>
    <property type="match status" value="1"/>
</dbReference>
<dbReference type="Pfam" id="PF04560">
    <property type="entry name" value="RNA_pol_Rpb2_7"/>
    <property type="match status" value="1"/>
</dbReference>
<dbReference type="SUPFAM" id="SSF64484">
    <property type="entry name" value="beta and beta-prime subunits of DNA dependent RNA-polymerase"/>
    <property type="match status" value="1"/>
</dbReference>
<dbReference type="PROSITE" id="PS01166">
    <property type="entry name" value="RNA_POL_BETA"/>
    <property type="match status" value="1"/>
</dbReference>
<keyword id="KW-0240">DNA-directed RNA polymerase</keyword>
<keyword id="KW-0548">Nucleotidyltransferase</keyword>
<keyword id="KW-0804">Transcription</keyword>
<keyword id="KW-0808">Transferase</keyword>
<comment type="function">
    <text evidence="1">DNA-dependent RNA polymerase catalyzes the transcription of DNA into RNA using the four ribonucleoside triphosphates as substrates.</text>
</comment>
<comment type="catalytic activity">
    <reaction evidence="1">
        <text>RNA(n) + a ribonucleoside 5'-triphosphate = RNA(n+1) + diphosphate</text>
        <dbReference type="Rhea" id="RHEA:21248"/>
        <dbReference type="Rhea" id="RHEA-COMP:14527"/>
        <dbReference type="Rhea" id="RHEA-COMP:17342"/>
        <dbReference type="ChEBI" id="CHEBI:33019"/>
        <dbReference type="ChEBI" id="CHEBI:61557"/>
        <dbReference type="ChEBI" id="CHEBI:140395"/>
        <dbReference type="EC" id="2.7.7.6"/>
    </reaction>
</comment>
<comment type="subunit">
    <text evidence="1">The RNAP catalytic core consists of 2 alpha, 1 beta, 1 beta' and 1 omega subunit. When a sigma factor is associated with the core the holoenzyme is formed, which can initiate transcription.</text>
</comment>
<comment type="similarity">
    <text evidence="1">Belongs to the RNA polymerase beta chain family.</text>
</comment>
<organism>
    <name type="scientific">Staphylococcus aureus (strain MRSA252)</name>
    <dbReference type="NCBI Taxonomy" id="282458"/>
    <lineage>
        <taxon>Bacteria</taxon>
        <taxon>Bacillati</taxon>
        <taxon>Bacillota</taxon>
        <taxon>Bacilli</taxon>
        <taxon>Bacillales</taxon>
        <taxon>Staphylococcaceae</taxon>
        <taxon>Staphylococcus</taxon>
    </lineage>
</organism>
<protein>
    <recommendedName>
        <fullName evidence="1">DNA-directed RNA polymerase subunit beta</fullName>
        <shortName evidence="1">RNAP subunit beta</shortName>
        <ecNumber evidence="1">2.7.7.6</ecNumber>
    </recommendedName>
    <alternativeName>
        <fullName evidence="1">RNA polymerase subunit beta</fullName>
    </alternativeName>
    <alternativeName>
        <fullName evidence="1">Transcriptase subunit beta</fullName>
    </alternativeName>
</protein>
<gene>
    <name evidence="1" type="primary">rpoB</name>
    <name type="ordered locus">SAR0547</name>
</gene>
<proteinExistence type="inferred from homology"/>
<name>RPOB_STAAR</name>
<evidence type="ECO:0000255" key="1">
    <source>
        <dbReference type="HAMAP-Rule" id="MF_01321"/>
    </source>
</evidence>
<reference key="1">
    <citation type="journal article" date="2004" name="Proc. Natl. Acad. Sci. U.S.A.">
        <title>Complete genomes of two clinical Staphylococcus aureus strains: evidence for the rapid evolution of virulence and drug resistance.</title>
        <authorList>
            <person name="Holden M.T.G."/>
            <person name="Feil E.J."/>
            <person name="Lindsay J.A."/>
            <person name="Peacock S.J."/>
            <person name="Day N.P.J."/>
            <person name="Enright M.C."/>
            <person name="Foster T.J."/>
            <person name="Moore C.E."/>
            <person name="Hurst L."/>
            <person name="Atkin R."/>
            <person name="Barron A."/>
            <person name="Bason N."/>
            <person name="Bentley S.D."/>
            <person name="Chillingworth C."/>
            <person name="Chillingworth T."/>
            <person name="Churcher C."/>
            <person name="Clark L."/>
            <person name="Corton C."/>
            <person name="Cronin A."/>
            <person name="Doggett J."/>
            <person name="Dowd L."/>
            <person name="Feltwell T."/>
            <person name="Hance Z."/>
            <person name="Harris B."/>
            <person name="Hauser H."/>
            <person name="Holroyd S."/>
            <person name="Jagels K."/>
            <person name="James K.D."/>
            <person name="Lennard N."/>
            <person name="Line A."/>
            <person name="Mayes R."/>
            <person name="Moule S."/>
            <person name="Mungall K."/>
            <person name="Ormond D."/>
            <person name="Quail M.A."/>
            <person name="Rabbinowitsch E."/>
            <person name="Rutherford K.M."/>
            <person name="Sanders M."/>
            <person name="Sharp S."/>
            <person name="Simmonds M."/>
            <person name="Stevens K."/>
            <person name="Whitehead S."/>
            <person name="Barrell B.G."/>
            <person name="Spratt B.G."/>
            <person name="Parkhill J."/>
        </authorList>
    </citation>
    <scope>NUCLEOTIDE SEQUENCE [LARGE SCALE GENOMIC DNA]</scope>
    <source>
        <strain>MRSA252</strain>
    </source>
</reference>
<feature type="chain" id="PRO_0000047961" description="DNA-directed RNA polymerase subunit beta">
    <location>
        <begin position="1"/>
        <end position="1183"/>
    </location>
</feature>